<dbReference type="EMBL" id="AE009952">
    <property type="protein sequence ID" value="AAM83913.1"/>
    <property type="status" value="ALT_INIT"/>
    <property type="molecule type" value="Genomic_DNA"/>
</dbReference>
<dbReference type="EMBL" id="AE017042">
    <property type="protein sequence ID" value="AAS63305.1"/>
    <property type="status" value="ALT_INIT"/>
    <property type="molecule type" value="Genomic_DNA"/>
</dbReference>
<dbReference type="EMBL" id="AL590842">
    <property type="protein sequence ID" value="CAL22498.1"/>
    <property type="status" value="ALT_INIT"/>
    <property type="molecule type" value="Genomic_DNA"/>
</dbReference>
<dbReference type="PIR" id="AG0476">
    <property type="entry name" value="AG0476"/>
</dbReference>
<dbReference type="RefSeq" id="WP_002209476.1">
    <property type="nucleotide sequence ID" value="NZ_WUCM01000072.1"/>
</dbReference>
<dbReference type="RefSeq" id="YP_002348788.1">
    <property type="nucleotide sequence ID" value="NC_003143.1"/>
</dbReference>
<dbReference type="SMR" id="Q7CL09"/>
<dbReference type="STRING" id="214092.YPO3913"/>
<dbReference type="PaxDb" id="214092-YPO3913"/>
<dbReference type="DNASU" id="1145269"/>
<dbReference type="EnsemblBacteria" id="AAS63305">
    <property type="protein sequence ID" value="AAS63305"/>
    <property type="gene ID" value="YP_3135"/>
</dbReference>
<dbReference type="GeneID" id="96663601"/>
<dbReference type="KEGG" id="ype:YPO3913"/>
<dbReference type="KEGG" id="ypk:y0322"/>
<dbReference type="KEGG" id="ypm:YP_3135"/>
<dbReference type="PATRIC" id="fig|214092.21.peg.4442"/>
<dbReference type="eggNOG" id="COG1309">
    <property type="taxonomic scope" value="Bacteria"/>
</dbReference>
<dbReference type="HOGENOM" id="CLU_081861_0_0_6"/>
<dbReference type="OMA" id="AYWYRKE"/>
<dbReference type="Proteomes" id="UP000000815">
    <property type="component" value="Chromosome"/>
</dbReference>
<dbReference type="Proteomes" id="UP000001019">
    <property type="component" value="Chromosome"/>
</dbReference>
<dbReference type="Proteomes" id="UP000002490">
    <property type="component" value="Chromosome"/>
</dbReference>
<dbReference type="GO" id="GO:0005737">
    <property type="term" value="C:cytoplasm"/>
    <property type="evidence" value="ECO:0007669"/>
    <property type="project" value="UniProtKB-SubCell"/>
</dbReference>
<dbReference type="GO" id="GO:0003677">
    <property type="term" value="F:DNA binding"/>
    <property type="evidence" value="ECO:0007669"/>
    <property type="project" value="UniProtKB-KW"/>
</dbReference>
<dbReference type="GO" id="GO:0003700">
    <property type="term" value="F:DNA-binding transcription factor activity"/>
    <property type="evidence" value="ECO:0007669"/>
    <property type="project" value="UniProtKB-UniRule"/>
</dbReference>
<dbReference type="GO" id="GO:0006633">
    <property type="term" value="P:fatty acid biosynthetic process"/>
    <property type="evidence" value="ECO:0007669"/>
    <property type="project" value="UniProtKB-UniRule"/>
</dbReference>
<dbReference type="GO" id="GO:0045717">
    <property type="term" value="P:negative regulation of fatty acid biosynthetic process"/>
    <property type="evidence" value="ECO:0007669"/>
    <property type="project" value="UniProtKB-UniRule"/>
</dbReference>
<dbReference type="FunFam" id="1.10.10.60:FF:000034">
    <property type="entry name" value="HTH-type transcriptional repressor FabR"/>
    <property type="match status" value="1"/>
</dbReference>
<dbReference type="FunFam" id="1.10.357.10:FF:000001">
    <property type="entry name" value="HTH-type transcriptional repressor FabR"/>
    <property type="match status" value="1"/>
</dbReference>
<dbReference type="Gene3D" id="1.10.10.60">
    <property type="entry name" value="Homeodomain-like"/>
    <property type="match status" value="1"/>
</dbReference>
<dbReference type="Gene3D" id="1.10.357.10">
    <property type="entry name" value="Tetracycline Repressor, domain 2"/>
    <property type="match status" value="1"/>
</dbReference>
<dbReference type="HAMAP" id="MF_01190">
    <property type="entry name" value="HTH_type_FabR"/>
    <property type="match status" value="1"/>
</dbReference>
<dbReference type="InterPro" id="IPR054129">
    <property type="entry name" value="DesT_TetR_C"/>
</dbReference>
<dbReference type="InterPro" id="IPR009057">
    <property type="entry name" value="Homeodomain-like_sf"/>
</dbReference>
<dbReference type="InterPro" id="IPR001647">
    <property type="entry name" value="HTH_TetR"/>
</dbReference>
<dbReference type="InterPro" id="IPR050692">
    <property type="entry name" value="HTH_transcr_repressor_FabR"/>
</dbReference>
<dbReference type="InterPro" id="IPR023764">
    <property type="entry name" value="Tscrpt_reg_HTH_FabR"/>
</dbReference>
<dbReference type="NCBIfam" id="NF008402">
    <property type="entry name" value="PRK11202.1"/>
    <property type="match status" value="1"/>
</dbReference>
<dbReference type="PANTHER" id="PTHR47752">
    <property type="entry name" value="HTH-TYPE TRANSCRIPTIONAL REPRESSOR FABR"/>
    <property type="match status" value="1"/>
</dbReference>
<dbReference type="PANTHER" id="PTHR47752:SF1">
    <property type="entry name" value="HTH-TYPE TRANSCRIPTIONAL REPRESSOR FABR"/>
    <property type="match status" value="1"/>
</dbReference>
<dbReference type="Pfam" id="PF21943">
    <property type="entry name" value="TetR_C_46"/>
    <property type="match status" value="1"/>
</dbReference>
<dbReference type="Pfam" id="PF00440">
    <property type="entry name" value="TetR_N"/>
    <property type="match status" value="1"/>
</dbReference>
<dbReference type="SUPFAM" id="SSF46689">
    <property type="entry name" value="Homeodomain-like"/>
    <property type="match status" value="1"/>
</dbReference>
<dbReference type="PROSITE" id="PS50977">
    <property type="entry name" value="HTH_TETR_2"/>
    <property type="match status" value="1"/>
</dbReference>
<accession>Q7CL09</accession>
<accession>Q74RC7</accession>
<comment type="function">
    <text evidence="1">Represses the transcription of fabB, involved in unsaturated fatty acid (UFA) biosynthesis. By controlling UFA production, FabR directly influences the physical properties of the membrane bilayer.</text>
</comment>
<comment type="subunit">
    <text evidence="1">Homodimer.</text>
</comment>
<comment type="subcellular location">
    <subcellularLocation>
        <location evidence="1">Cytoplasm</location>
    </subcellularLocation>
</comment>
<comment type="sequence caution" evidence="2">
    <conflict type="erroneous initiation">
        <sequence resource="EMBL-CDS" id="AAM83913"/>
    </conflict>
</comment>
<comment type="sequence caution" evidence="2">
    <conflict type="erroneous initiation">
        <sequence resource="EMBL-CDS" id="AAS63305"/>
    </conflict>
</comment>
<comment type="sequence caution" evidence="2">
    <conflict type="erroneous initiation">
        <sequence resource="EMBL-CDS" id="CAL22498"/>
    </conflict>
</comment>
<evidence type="ECO:0000255" key="1">
    <source>
        <dbReference type="HAMAP-Rule" id="MF_01190"/>
    </source>
</evidence>
<evidence type="ECO:0000305" key="2"/>
<reference key="1">
    <citation type="journal article" date="2002" name="J. Bacteriol.">
        <title>Genome sequence of Yersinia pestis KIM.</title>
        <authorList>
            <person name="Deng W."/>
            <person name="Burland V."/>
            <person name="Plunkett G. III"/>
            <person name="Boutin A."/>
            <person name="Mayhew G.F."/>
            <person name="Liss P."/>
            <person name="Perna N.T."/>
            <person name="Rose D.J."/>
            <person name="Mau B."/>
            <person name="Zhou S."/>
            <person name="Schwartz D.C."/>
            <person name="Fetherston J.D."/>
            <person name="Lindler L.E."/>
            <person name="Brubaker R.R."/>
            <person name="Plano G.V."/>
            <person name="Straley S.C."/>
            <person name="McDonough K.A."/>
            <person name="Nilles M.L."/>
            <person name="Matson J.S."/>
            <person name="Blattner F.R."/>
            <person name="Perry R.D."/>
        </authorList>
    </citation>
    <scope>NUCLEOTIDE SEQUENCE [LARGE SCALE GENOMIC DNA]</scope>
    <source>
        <strain>KIM10+ / Biovar Mediaevalis</strain>
    </source>
</reference>
<reference key="2">
    <citation type="journal article" date="2001" name="Nature">
        <title>Genome sequence of Yersinia pestis, the causative agent of plague.</title>
        <authorList>
            <person name="Parkhill J."/>
            <person name="Wren B.W."/>
            <person name="Thomson N.R."/>
            <person name="Titball R.W."/>
            <person name="Holden M.T.G."/>
            <person name="Prentice M.B."/>
            <person name="Sebaihia M."/>
            <person name="James K.D."/>
            <person name="Churcher C.M."/>
            <person name="Mungall K.L."/>
            <person name="Baker S."/>
            <person name="Basham D."/>
            <person name="Bentley S.D."/>
            <person name="Brooks K."/>
            <person name="Cerdeno-Tarraga A.-M."/>
            <person name="Chillingworth T."/>
            <person name="Cronin A."/>
            <person name="Davies R.M."/>
            <person name="Davis P."/>
            <person name="Dougan G."/>
            <person name="Feltwell T."/>
            <person name="Hamlin N."/>
            <person name="Holroyd S."/>
            <person name="Jagels K."/>
            <person name="Karlyshev A.V."/>
            <person name="Leather S."/>
            <person name="Moule S."/>
            <person name="Oyston P.C.F."/>
            <person name="Quail M.A."/>
            <person name="Rutherford K.M."/>
            <person name="Simmonds M."/>
            <person name="Skelton J."/>
            <person name="Stevens K."/>
            <person name="Whitehead S."/>
            <person name="Barrell B.G."/>
        </authorList>
    </citation>
    <scope>NUCLEOTIDE SEQUENCE [LARGE SCALE GENOMIC DNA]</scope>
    <source>
        <strain>CO-92 / Biovar Orientalis</strain>
    </source>
</reference>
<reference key="3">
    <citation type="journal article" date="2004" name="DNA Res.">
        <title>Complete genome sequence of Yersinia pestis strain 91001, an isolate avirulent to humans.</title>
        <authorList>
            <person name="Song Y."/>
            <person name="Tong Z."/>
            <person name="Wang J."/>
            <person name="Wang L."/>
            <person name="Guo Z."/>
            <person name="Han Y."/>
            <person name="Zhang J."/>
            <person name="Pei D."/>
            <person name="Zhou D."/>
            <person name="Qin H."/>
            <person name="Pang X."/>
            <person name="Han Y."/>
            <person name="Zhai J."/>
            <person name="Li M."/>
            <person name="Cui B."/>
            <person name="Qi Z."/>
            <person name="Jin L."/>
            <person name="Dai R."/>
            <person name="Chen F."/>
            <person name="Li S."/>
            <person name="Ye C."/>
            <person name="Du Z."/>
            <person name="Lin W."/>
            <person name="Wang J."/>
            <person name="Yu J."/>
            <person name="Yang H."/>
            <person name="Wang J."/>
            <person name="Huang P."/>
            <person name="Yang R."/>
        </authorList>
    </citation>
    <scope>NUCLEOTIDE SEQUENCE [LARGE SCALE GENOMIC DNA]</scope>
    <source>
        <strain>91001 / Biovar Mediaevalis</strain>
    </source>
</reference>
<keyword id="KW-0963">Cytoplasm</keyword>
<keyword id="KW-0238">DNA-binding</keyword>
<keyword id="KW-0275">Fatty acid biosynthesis</keyword>
<keyword id="KW-0276">Fatty acid metabolism</keyword>
<keyword id="KW-0444">Lipid biosynthesis</keyword>
<keyword id="KW-0443">Lipid metabolism</keyword>
<keyword id="KW-1185">Reference proteome</keyword>
<keyword id="KW-0678">Repressor</keyword>
<keyword id="KW-0804">Transcription</keyword>
<keyword id="KW-0805">Transcription regulation</keyword>
<organism>
    <name type="scientific">Yersinia pestis</name>
    <dbReference type="NCBI Taxonomy" id="632"/>
    <lineage>
        <taxon>Bacteria</taxon>
        <taxon>Pseudomonadati</taxon>
        <taxon>Pseudomonadota</taxon>
        <taxon>Gammaproteobacteria</taxon>
        <taxon>Enterobacterales</taxon>
        <taxon>Yersiniaceae</taxon>
        <taxon>Yersinia</taxon>
    </lineage>
</organism>
<gene>
    <name evidence="1" type="primary">fabR</name>
    <name type="ordered locus">YPO3913</name>
    <name type="ordered locus">y0322</name>
    <name type="ordered locus">YP_3135</name>
</gene>
<feature type="chain" id="PRO_0000293579" description="HTH-type transcriptional repressor FabR">
    <location>
        <begin position="1"/>
        <end position="211"/>
    </location>
</feature>
<feature type="domain" description="HTH tetR-type" evidence="1">
    <location>
        <begin position="10"/>
        <end position="70"/>
    </location>
</feature>
<feature type="DNA-binding region" description="H-T-H motif" evidence="1">
    <location>
        <begin position="33"/>
        <end position="52"/>
    </location>
</feature>
<protein>
    <recommendedName>
        <fullName evidence="1">HTH-type transcriptional repressor FabR</fullName>
    </recommendedName>
</protein>
<proteinExistence type="inferred from homology"/>
<name>FABR_YERPE</name>
<sequence>MGVRAQQKERTRRSLIEAAFSQLSAERSFASLSLREVSREAGIAPTSFYRHFRDVDELGLTMVDESGLMLRQLMRQARQRIAKGGSVIRTSVSTFMEFIGNNPNAFRLLLRERSGTSAAFRAAVAREIQHFIAELADYLELENHMPRSFTEAQAEAMVTIVFSAGAEVLDVDIEQRRQLEERLVLQLRMISKGAYYWYRREQEKLAASRVE</sequence>